<protein>
    <recommendedName>
        <fullName>Thiamine biosynthesis multifunctional protein ThiED</fullName>
    </recommendedName>
    <domain>
        <recommendedName>
            <fullName>Thiamine-phosphate synthase</fullName>
            <shortName>TMP-PPase</shortName>
            <shortName>TP synthase</shortName>
            <shortName>TPS</shortName>
            <ecNumber evidence="2">2.5.1.3</ecNumber>
        </recommendedName>
        <alternativeName>
            <fullName>Thiamine-phosphate pyrophosphorylase</fullName>
            <shortName>TMP pyrophosphorylase</shortName>
        </alternativeName>
    </domain>
    <domain>
        <recommendedName>
            <fullName>Hydroxymethylpyrimidine/phosphomethylpyrimidine kinase</fullName>
            <ecNumber evidence="3">2.7.1.49</ecNumber>
            <ecNumber evidence="3">2.7.4.7</ecNumber>
        </recommendedName>
        <alternativeName>
            <fullName>Hydroxymethylpyrimidine kinase</fullName>
            <shortName>HMP kinase</shortName>
        </alternativeName>
        <alternativeName>
            <fullName>Hydroxymethylpyrimidine phosphate kinase</fullName>
            <shortName>HMP-P kinase</shortName>
            <shortName>HMP-phosphate kinase</shortName>
            <shortName>HMPP kinase</shortName>
        </alternativeName>
    </domain>
</protein>
<organism>
    <name type="scientific">Corynebacterium efficiens (strain DSM 44549 / YS-314 / AJ 12310 / JCM 11189 / NBRC 100395)</name>
    <dbReference type="NCBI Taxonomy" id="196164"/>
    <lineage>
        <taxon>Bacteria</taxon>
        <taxon>Bacillati</taxon>
        <taxon>Actinomycetota</taxon>
        <taxon>Actinomycetes</taxon>
        <taxon>Mycobacteriales</taxon>
        <taxon>Corynebacteriaceae</taxon>
        <taxon>Corynebacterium</taxon>
    </lineage>
</organism>
<dbReference type="EC" id="2.5.1.3" evidence="2"/>
<dbReference type="EC" id="2.7.1.49" evidence="3"/>
<dbReference type="EC" id="2.7.4.7" evidence="3"/>
<dbReference type="EMBL" id="BA000035">
    <property type="protein sequence ID" value="BAC18401.1"/>
    <property type="molecule type" value="Genomic_DNA"/>
</dbReference>
<dbReference type="RefSeq" id="WP_006767589.1">
    <property type="nucleotide sequence ID" value="NC_004369.1"/>
</dbReference>
<dbReference type="SMR" id="Q8FTH8"/>
<dbReference type="STRING" id="196164.gene:10742010"/>
<dbReference type="KEGG" id="cef:CE1591"/>
<dbReference type="eggNOG" id="COG0351">
    <property type="taxonomic scope" value="Bacteria"/>
</dbReference>
<dbReference type="eggNOG" id="COG0352">
    <property type="taxonomic scope" value="Bacteria"/>
</dbReference>
<dbReference type="eggNOG" id="COG0819">
    <property type="taxonomic scope" value="Bacteria"/>
</dbReference>
<dbReference type="HOGENOM" id="CLU_020520_2_0_11"/>
<dbReference type="OrthoDB" id="34166at2"/>
<dbReference type="UniPathway" id="UPA00060">
    <property type="reaction ID" value="UER00138"/>
</dbReference>
<dbReference type="UniPathway" id="UPA00060">
    <property type="reaction ID" value="UER00141"/>
</dbReference>
<dbReference type="Proteomes" id="UP000001409">
    <property type="component" value="Chromosome"/>
</dbReference>
<dbReference type="GO" id="GO:0005829">
    <property type="term" value="C:cytosol"/>
    <property type="evidence" value="ECO:0007669"/>
    <property type="project" value="TreeGrafter"/>
</dbReference>
<dbReference type="GO" id="GO:0005524">
    <property type="term" value="F:ATP binding"/>
    <property type="evidence" value="ECO:0007669"/>
    <property type="project" value="UniProtKB-KW"/>
</dbReference>
<dbReference type="GO" id="GO:0008902">
    <property type="term" value="F:hydroxymethylpyrimidine kinase activity"/>
    <property type="evidence" value="ECO:0007669"/>
    <property type="project" value="UniProtKB-EC"/>
</dbReference>
<dbReference type="GO" id="GO:0000287">
    <property type="term" value="F:magnesium ion binding"/>
    <property type="evidence" value="ECO:0007669"/>
    <property type="project" value="UniProtKB-UniRule"/>
</dbReference>
<dbReference type="GO" id="GO:0008972">
    <property type="term" value="F:phosphomethylpyrimidine kinase activity"/>
    <property type="evidence" value="ECO:0007669"/>
    <property type="project" value="UniProtKB-EC"/>
</dbReference>
<dbReference type="GO" id="GO:0004789">
    <property type="term" value="F:thiamine-phosphate diphosphorylase activity"/>
    <property type="evidence" value="ECO:0007669"/>
    <property type="project" value="UniProtKB-UniRule"/>
</dbReference>
<dbReference type="GO" id="GO:0009228">
    <property type="term" value="P:thiamine biosynthetic process"/>
    <property type="evidence" value="ECO:0007669"/>
    <property type="project" value="UniProtKB-KW"/>
</dbReference>
<dbReference type="GO" id="GO:0009229">
    <property type="term" value="P:thiamine diphosphate biosynthetic process"/>
    <property type="evidence" value="ECO:0007669"/>
    <property type="project" value="UniProtKB-UniRule"/>
</dbReference>
<dbReference type="CDD" id="cd01169">
    <property type="entry name" value="HMPP_kinase"/>
    <property type="match status" value="1"/>
</dbReference>
<dbReference type="CDD" id="cd19365">
    <property type="entry name" value="TenA_C-like"/>
    <property type="match status" value="1"/>
</dbReference>
<dbReference type="CDD" id="cd00564">
    <property type="entry name" value="TMP_TenI"/>
    <property type="match status" value="1"/>
</dbReference>
<dbReference type="FunFam" id="3.40.1190.20:FF:000003">
    <property type="entry name" value="Phosphomethylpyrimidine kinase ThiD"/>
    <property type="match status" value="1"/>
</dbReference>
<dbReference type="Gene3D" id="3.40.1190.20">
    <property type="match status" value="1"/>
</dbReference>
<dbReference type="Gene3D" id="3.20.20.70">
    <property type="entry name" value="Aldolase class I"/>
    <property type="match status" value="1"/>
</dbReference>
<dbReference type="Gene3D" id="1.20.910.10">
    <property type="entry name" value="Heme oxygenase-like"/>
    <property type="match status" value="1"/>
</dbReference>
<dbReference type="HAMAP" id="MF_00097">
    <property type="entry name" value="TMP_synthase"/>
    <property type="match status" value="1"/>
</dbReference>
<dbReference type="InterPro" id="IPR013785">
    <property type="entry name" value="Aldolase_TIM"/>
</dbReference>
<dbReference type="InterPro" id="IPR016084">
    <property type="entry name" value="Haem_Oase-like_multi-hlx"/>
</dbReference>
<dbReference type="InterPro" id="IPR004399">
    <property type="entry name" value="HMP/HMP-P_kinase_dom"/>
</dbReference>
<dbReference type="InterPro" id="IPR013749">
    <property type="entry name" value="PM/HMP-P_kinase-1"/>
</dbReference>
<dbReference type="InterPro" id="IPR029056">
    <property type="entry name" value="Ribokinase-like"/>
</dbReference>
<dbReference type="InterPro" id="IPR004305">
    <property type="entry name" value="Thiaminase-2/PQQC"/>
</dbReference>
<dbReference type="InterPro" id="IPR036206">
    <property type="entry name" value="ThiamineP_synth_sf"/>
</dbReference>
<dbReference type="InterPro" id="IPR022998">
    <property type="entry name" value="ThiamineP_synth_TenI"/>
</dbReference>
<dbReference type="InterPro" id="IPR034291">
    <property type="entry name" value="TMP_synthase"/>
</dbReference>
<dbReference type="NCBIfam" id="TIGR00097">
    <property type="entry name" value="HMP-P_kinase"/>
    <property type="match status" value="1"/>
</dbReference>
<dbReference type="NCBIfam" id="NF007070">
    <property type="entry name" value="PRK09517.1"/>
    <property type="match status" value="1"/>
</dbReference>
<dbReference type="NCBIfam" id="NF011301">
    <property type="entry name" value="PRK14713.1"/>
    <property type="match status" value="1"/>
</dbReference>
<dbReference type="NCBIfam" id="TIGR00693">
    <property type="entry name" value="thiE"/>
    <property type="match status" value="1"/>
</dbReference>
<dbReference type="PANTHER" id="PTHR20858:SF17">
    <property type="entry name" value="HYDROXYMETHYLPYRIMIDINE_PHOSPHOMETHYLPYRIMIDINE KINASE THI20-RELATED"/>
    <property type="match status" value="1"/>
</dbReference>
<dbReference type="PANTHER" id="PTHR20858">
    <property type="entry name" value="PHOSPHOMETHYLPYRIMIDINE KINASE"/>
    <property type="match status" value="1"/>
</dbReference>
<dbReference type="Pfam" id="PF08543">
    <property type="entry name" value="Phos_pyr_kin"/>
    <property type="match status" value="1"/>
</dbReference>
<dbReference type="Pfam" id="PF03070">
    <property type="entry name" value="TENA_THI-4"/>
    <property type="match status" value="1"/>
</dbReference>
<dbReference type="Pfam" id="PF02581">
    <property type="entry name" value="TMP-TENI"/>
    <property type="match status" value="1"/>
</dbReference>
<dbReference type="SUPFAM" id="SSF48613">
    <property type="entry name" value="Heme oxygenase-like"/>
    <property type="match status" value="1"/>
</dbReference>
<dbReference type="SUPFAM" id="SSF53613">
    <property type="entry name" value="Ribokinase-like"/>
    <property type="match status" value="1"/>
</dbReference>
<dbReference type="SUPFAM" id="SSF51391">
    <property type="entry name" value="Thiamin phosphate synthase"/>
    <property type="match status" value="1"/>
</dbReference>
<proteinExistence type="inferred from homology"/>
<reference key="1">
    <citation type="journal article" date="2003" name="Genome Res.">
        <title>Comparative complete genome sequence analysis of the amino acid replacements responsible for the thermostability of Corynebacterium efficiens.</title>
        <authorList>
            <person name="Nishio Y."/>
            <person name="Nakamura Y."/>
            <person name="Kawarabayasi Y."/>
            <person name="Usuda Y."/>
            <person name="Kimura E."/>
            <person name="Sugimoto S."/>
            <person name="Matsui K."/>
            <person name="Yamagishi A."/>
            <person name="Kikuchi H."/>
            <person name="Ikeo K."/>
            <person name="Gojobori T."/>
        </authorList>
    </citation>
    <scope>NUCLEOTIDE SEQUENCE [LARGE SCALE GENOMIC DNA]</scope>
    <source>
        <strain>DSM 44549 / YS-314 / AJ 12310 / JCM 11189 / NBRC 100395</strain>
    </source>
</reference>
<accession>Q8FTH8</accession>
<comment type="function">
    <text evidence="2">Condenses 4-methyl-5-(beta-hydroxyethyl)thiazole monophosphate (THZ-P) and 2-methyl-4-amino-5-hydroxymethyl pyrimidine pyrophosphate (HMP-PP) to form thiamine monophosphate (TMP).</text>
</comment>
<comment type="function">
    <text evidence="3">Catalyzes the phosphorylation of hydroxymethylpyrimidine phosphate (HMP-P) to HMP-PP, and of HMP to HMP-P.</text>
</comment>
<comment type="catalytic activity">
    <reaction evidence="2">
        <text>2-[(2R,5Z)-2-carboxy-4-methylthiazol-5(2H)-ylidene]ethyl phosphate + 4-amino-2-methyl-5-(diphosphooxymethyl)pyrimidine + 2 H(+) = thiamine phosphate + CO2 + diphosphate</text>
        <dbReference type="Rhea" id="RHEA:47844"/>
        <dbReference type="ChEBI" id="CHEBI:15378"/>
        <dbReference type="ChEBI" id="CHEBI:16526"/>
        <dbReference type="ChEBI" id="CHEBI:33019"/>
        <dbReference type="ChEBI" id="CHEBI:37575"/>
        <dbReference type="ChEBI" id="CHEBI:57841"/>
        <dbReference type="ChEBI" id="CHEBI:62899"/>
        <dbReference type="EC" id="2.5.1.3"/>
    </reaction>
</comment>
<comment type="catalytic activity">
    <reaction evidence="2">
        <text>2-(2-carboxy-4-methylthiazol-5-yl)ethyl phosphate + 4-amino-2-methyl-5-(diphosphooxymethyl)pyrimidine + 2 H(+) = thiamine phosphate + CO2 + diphosphate</text>
        <dbReference type="Rhea" id="RHEA:47848"/>
        <dbReference type="ChEBI" id="CHEBI:15378"/>
        <dbReference type="ChEBI" id="CHEBI:16526"/>
        <dbReference type="ChEBI" id="CHEBI:33019"/>
        <dbReference type="ChEBI" id="CHEBI:37575"/>
        <dbReference type="ChEBI" id="CHEBI:57841"/>
        <dbReference type="ChEBI" id="CHEBI:62890"/>
        <dbReference type="EC" id="2.5.1.3"/>
    </reaction>
</comment>
<comment type="catalytic activity">
    <reaction evidence="2">
        <text>4-methyl-5-(2-phosphooxyethyl)-thiazole + 4-amino-2-methyl-5-(diphosphooxymethyl)pyrimidine + H(+) = thiamine phosphate + diphosphate</text>
        <dbReference type="Rhea" id="RHEA:22328"/>
        <dbReference type="ChEBI" id="CHEBI:15378"/>
        <dbReference type="ChEBI" id="CHEBI:33019"/>
        <dbReference type="ChEBI" id="CHEBI:37575"/>
        <dbReference type="ChEBI" id="CHEBI:57841"/>
        <dbReference type="ChEBI" id="CHEBI:58296"/>
        <dbReference type="EC" id="2.5.1.3"/>
    </reaction>
</comment>
<comment type="catalytic activity">
    <reaction evidence="3">
        <text>4-amino-5-hydroxymethyl-2-methylpyrimidine + ATP = 4-amino-2-methyl-5-(phosphooxymethyl)pyrimidine + ADP + H(+)</text>
        <dbReference type="Rhea" id="RHEA:23096"/>
        <dbReference type="ChEBI" id="CHEBI:15378"/>
        <dbReference type="ChEBI" id="CHEBI:16892"/>
        <dbReference type="ChEBI" id="CHEBI:30616"/>
        <dbReference type="ChEBI" id="CHEBI:58354"/>
        <dbReference type="ChEBI" id="CHEBI:456216"/>
        <dbReference type="EC" id="2.7.1.49"/>
    </reaction>
</comment>
<comment type="catalytic activity">
    <reaction evidence="3">
        <text>4-amino-2-methyl-5-(phosphooxymethyl)pyrimidine + ATP = 4-amino-2-methyl-5-(diphosphooxymethyl)pyrimidine + ADP</text>
        <dbReference type="Rhea" id="RHEA:19893"/>
        <dbReference type="ChEBI" id="CHEBI:30616"/>
        <dbReference type="ChEBI" id="CHEBI:57841"/>
        <dbReference type="ChEBI" id="CHEBI:58354"/>
        <dbReference type="ChEBI" id="CHEBI:456216"/>
        <dbReference type="EC" id="2.7.4.7"/>
    </reaction>
</comment>
<comment type="cofactor">
    <cofactor evidence="1">
        <name>Mg(2+)</name>
        <dbReference type="ChEBI" id="CHEBI:18420"/>
    </cofactor>
    <text evidence="1">Binds 1 Mg(2+) ion per subunit.</text>
</comment>
<comment type="pathway">
    <text>Cofactor biosynthesis; thiamine diphosphate biosynthesis; 4-amino-2-methyl-5-diphosphomethylpyrimidine from 5-amino-1-(5-phospho-D-ribosyl)imidazole: step 3/3.</text>
</comment>
<comment type="pathway">
    <text>Cofactor biosynthesis; thiamine diphosphate biosynthesis; thiamine phosphate from 4-amino-2-methyl-5-diphosphomethylpyrimidine and 4-methyl-5-(2-phosphoethyl)-thiazole: step 1/1.</text>
</comment>
<comment type="miscellaneous">
    <text>There is also a ThiE protein in this bacteria (AC Q8FP55).</text>
</comment>
<comment type="similarity">
    <text evidence="4">In the N-terminal section; belongs to the thiamine-phosphate synthase family.</text>
</comment>
<comment type="similarity">
    <text evidence="4">In the central section; belongs to the ThiD family.</text>
</comment>
<comment type="similarity">
    <text evidence="4">In the C-terminal section; belongs to the thiaminase-2 family.</text>
</comment>
<feature type="chain" id="PRO_0000192038" description="Thiamine biosynthesis multifunctional protein ThiED">
    <location>
        <begin position="1"/>
        <end position="739"/>
    </location>
</feature>
<feature type="region of interest" description="Thiamine-phosphate synthase">
    <location>
        <begin position="1"/>
        <end position="210"/>
    </location>
</feature>
<feature type="region of interest" description="Hydroxymethylpyrimidine/phosphomethylpyrimidine kinase">
    <location>
        <begin position="226"/>
        <end position="481"/>
    </location>
</feature>
<feature type="region of interest" description="Thiaminase-2">
    <location>
        <begin position="527"/>
        <end position="739"/>
    </location>
</feature>
<feature type="binding site" evidence="1">
    <location>
        <begin position="37"/>
        <end position="41"/>
    </location>
    <ligand>
        <name>4-amino-2-methyl-5-(diphosphooxymethyl)pyrimidine</name>
        <dbReference type="ChEBI" id="CHEBI:57841"/>
    </ligand>
</feature>
<feature type="binding site" evidence="1">
    <location>
        <position position="69"/>
    </location>
    <ligand>
        <name>4-amino-2-methyl-5-(diphosphooxymethyl)pyrimidine</name>
        <dbReference type="ChEBI" id="CHEBI:57841"/>
    </ligand>
</feature>
<feature type="binding site" evidence="1">
    <location>
        <position position="70"/>
    </location>
    <ligand>
        <name>Mg(2+)</name>
        <dbReference type="ChEBI" id="CHEBI:18420"/>
    </ligand>
</feature>
<feature type="binding site" evidence="1">
    <location>
        <position position="88"/>
    </location>
    <ligand>
        <name>Mg(2+)</name>
        <dbReference type="ChEBI" id="CHEBI:18420"/>
    </ligand>
</feature>
<feature type="binding site" evidence="1">
    <location>
        <position position="107"/>
    </location>
    <ligand>
        <name>4-amino-2-methyl-5-(diphosphooxymethyl)pyrimidine</name>
        <dbReference type="ChEBI" id="CHEBI:57841"/>
    </ligand>
</feature>
<feature type="binding site" evidence="1">
    <location>
        <begin position="140"/>
        <end position="142"/>
    </location>
    <ligand>
        <name>2-[(2R,5Z)-2-carboxy-4-methylthiazol-5(2H)-ylidene]ethyl phosphate</name>
        <dbReference type="ChEBI" id="CHEBI:62899"/>
    </ligand>
</feature>
<feature type="binding site" evidence="1">
    <location>
        <position position="143"/>
    </location>
    <ligand>
        <name>4-amino-2-methyl-5-(diphosphooxymethyl)pyrimidine</name>
        <dbReference type="ChEBI" id="CHEBI:57841"/>
    </ligand>
</feature>
<feature type="binding site" evidence="1">
    <location>
        <position position="174"/>
    </location>
    <ligand>
        <name>2-[(2R,5Z)-2-carboxy-4-methylthiazol-5(2H)-ylidene]ethyl phosphate</name>
        <dbReference type="ChEBI" id="CHEBI:62899"/>
    </ligand>
</feature>
<feature type="binding site" evidence="1">
    <location>
        <begin position="194"/>
        <end position="195"/>
    </location>
    <ligand>
        <name>2-[(2R,5Z)-2-carboxy-4-methylthiazol-5(2H)-ylidene]ethyl phosphate</name>
        <dbReference type="ChEBI" id="CHEBI:62899"/>
    </ligand>
</feature>
<feature type="binding site" evidence="1">
    <location>
        <position position="263"/>
    </location>
    <ligand>
        <name>4-amino-5-hydroxymethyl-2-methylpyrimidine</name>
        <dbReference type="ChEBI" id="CHEBI:16892"/>
    </ligand>
</feature>
<name>THIED_COREF</name>
<keyword id="KW-0067">ATP-binding</keyword>
<keyword id="KW-0418">Kinase</keyword>
<keyword id="KW-0460">Magnesium</keyword>
<keyword id="KW-0479">Metal-binding</keyword>
<keyword id="KW-0511">Multifunctional enzyme</keyword>
<keyword id="KW-0547">Nucleotide-binding</keyword>
<keyword id="KW-1185">Reference proteome</keyword>
<keyword id="KW-0784">Thiamine biosynthesis</keyword>
<keyword id="KW-0808">Transferase</keyword>
<evidence type="ECO:0000250" key="1"/>
<evidence type="ECO:0000250" key="2">
    <source>
        <dbReference type="UniProtKB" id="P39594"/>
    </source>
</evidence>
<evidence type="ECO:0000250" key="3">
    <source>
        <dbReference type="UniProtKB" id="P76422"/>
    </source>
</evidence>
<evidence type="ECO:0000305" key="4"/>
<gene>
    <name type="primary">thiED</name>
    <name type="ordered locus">CE1591</name>
</gene>
<sequence>MTDFSLYLVTDPHLGGGPERVAGIVEDAINGGVTVVQLRDKDADEQTFREHAMELKRVCDRLGVPLFLNDRFAVAAELSCHVHIGQGDLPYVQARRQLPGHLMIGLTIETMDQLETVIADCTRAGIALPDVVGLGPVQATDTKPDAPQAVGVDGVAAMAKVARAHGIASVAIGGVGLANAADLARTGVDGLCVVSAIMAAPSPAEAARELLDVWEAGRRVAQPRVLTIAGTDPTGGAGVQADLKSIAAAGGFGMSVITALVAQNTHGVTGVHTPPADFLDEQLESVFSDVTVDAVKLGMLGRADTVRQVTGWLRTRPHGPVILDPVMVATSGDSLLDPDATEALLELATVVDVITPNIPELAVLCGEQPAPSFDAAIEQARRFATDVGTTVIVKGGHLTGPRADNAVVYPDGSVHMVANPRVDTTNSHGTGCSLSAALATRMGAGHPVDKALDWATRWLNEALRGADALQVGSGSGPVDHFAVTRRLLRAADATPWPHLRMGAPSDGIITPSDTQSPAPALAPAGPYTRALWEATGDVLGEILDSGFIRGLGDGTLSREEFLFYIDQDAHYLRQYSRALATLSSRAPDAPAQVDWATSAAECITVEAELHRTYLNKGLAETGVSAPSPVTMAYTDFLIARSHADDYVVGAAAVLPCYWLYAEIGLILAKQNHPEHPYTDWLDTYSGEGFLAGTVKAIARVEAAMAGAGPDQQRVAAQTYLSACVHEREFFDQATRQGWN</sequence>